<proteinExistence type="evidence at protein level"/>
<organism>
    <name type="scientific">Saccharomyces cerevisiae (strain ATCC 204508 / S288c)</name>
    <name type="common">Baker's yeast</name>
    <dbReference type="NCBI Taxonomy" id="559292"/>
    <lineage>
        <taxon>Eukaryota</taxon>
        <taxon>Fungi</taxon>
        <taxon>Dikarya</taxon>
        <taxon>Ascomycota</taxon>
        <taxon>Saccharomycotina</taxon>
        <taxon>Saccharomycetes</taxon>
        <taxon>Saccharomycetales</taxon>
        <taxon>Saccharomycetaceae</taxon>
        <taxon>Saccharomyces</taxon>
    </lineage>
</organism>
<feature type="transit peptide" description="Mitochondrion" evidence="1">
    <location>
        <begin position="1"/>
        <end position="44"/>
    </location>
</feature>
<feature type="chain" id="PRO_0000202899" description="tRNA (guanine(37)-N(1))-methyltransferase">
    <location>
        <begin position="45"/>
        <end position="499"/>
    </location>
</feature>
<feature type="binding site" evidence="1">
    <location>
        <position position="268"/>
    </location>
    <ligand>
        <name>S-adenosyl-L-methionine</name>
        <dbReference type="ChEBI" id="CHEBI:59789"/>
    </ligand>
</feature>
<feature type="binding site" evidence="1">
    <location>
        <begin position="307"/>
        <end position="308"/>
    </location>
    <ligand>
        <name>S-adenosyl-L-methionine</name>
        <dbReference type="ChEBI" id="CHEBI:59789"/>
    </ligand>
</feature>
<feature type="binding site" evidence="1">
    <location>
        <begin position="335"/>
        <end position="336"/>
    </location>
    <ligand>
        <name>S-adenosyl-L-methionine</name>
        <dbReference type="ChEBI" id="CHEBI:59789"/>
    </ligand>
</feature>
<feature type="binding site" evidence="1">
    <location>
        <position position="399"/>
    </location>
    <ligand>
        <name>S-adenosyl-L-methionine</name>
        <dbReference type="ChEBI" id="CHEBI:59789"/>
    </ligand>
</feature>
<feature type="mutagenesis site" description="Abolishes mitochondrial localization and activity, but not cytoplasmic activity of the enzyme." evidence="4">
    <location>
        <begin position="1"/>
        <end position="33"/>
    </location>
</feature>
<keyword id="KW-0963">Cytoplasm</keyword>
<keyword id="KW-0489">Methyltransferase</keyword>
<keyword id="KW-0496">Mitochondrion</keyword>
<keyword id="KW-0539">Nucleus</keyword>
<keyword id="KW-1185">Reference proteome</keyword>
<keyword id="KW-0949">S-adenosyl-L-methionine</keyword>
<keyword id="KW-0808">Transferase</keyword>
<keyword id="KW-0809">Transit peptide</keyword>
<keyword id="KW-0819">tRNA processing</keyword>
<evidence type="ECO:0000255" key="1">
    <source>
        <dbReference type="HAMAP-Rule" id="MF_03152"/>
    </source>
</evidence>
<evidence type="ECO:0000269" key="2">
    <source>
    </source>
</evidence>
<evidence type="ECO:0000269" key="3">
    <source>
    </source>
</evidence>
<evidence type="ECO:0000269" key="4">
    <source>
    </source>
</evidence>
<evidence type="ECO:0000269" key="5">
    <source>
    </source>
</evidence>
<evidence type="ECO:0000269" key="6">
    <source>
    </source>
</evidence>
<evidence type="ECO:0000305" key="7"/>
<protein>
    <recommendedName>
        <fullName evidence="1">tRNA (guanine(37)-N(1))-methyltransferase</fullName>
        <ecNumber evidence="1">2.1.1.228</ecNumber>
    </recommendedName>
    <alternativeName>
        <fullName evidence="1">M1G-methyltransferase</fullName>
    </alternativeName>
    <alternativeName>
        <fullName evidence="1">tRNA [GM37] methyltransferase</fullName>
    </alternativeName>
    <alternativeName>
        <fullName evidence="1">tRNA methyltransferase 5</fullName>
    </alternativeName>
</protein>
<name>TRM5_YEAST</name>
<dbReference type="EC" id="2.1.1.228" evidence="1"/>
<dbReference type="EMBL" id="U00061">
    <property type="protein sequence ID" value="AAB68376.1"/>
    <property type="molecule type" value="Genomic_DNA"/>
</dbReference>
<dbReference type="EMBL" id="BK006934">
    <property type="protein sequence ID" value="DAA06763.1"/>
    <property type="molecule type" value="Genomic_DNA"/>
</dbReference>
<dbReference type="PIR" id="S46697">
    <property type="entry name" value="S46697"/>
</dbReference>
<dbReference type="RefSeq" id="NP_011937.1">
    <property type="nucleotide sequence ID" value="NM_001179200.1"/>
</dbReference>
<dbReference type="BioGRID" id="36502">
    <property type="interactions" value="18"/>
</dbReference>
<dbReference type="DIP" id="DIP-2950N"/>
<dbReference type="FunCoup" id="P38793">
    <property type="interactions" value="1306"/>
</dbReference>
<dbReference type="IntAct" id="P38793">
    <property type="interactions" value="6"/>
</dbReference>
<dbReference type="MINT" id="P38793"/>
<dbReference type="STRING" id="4932.YHR070W"/>
<dbReference type="GlyGen" id="P38793">
    <property type="glycosylation" value="1 site, 1 O-linked glycan (1 site)"/>
</dbReference>
<dbReference type="iPTMnet" id="P38793"/>
<dbReference type="PaxDb" id="4932-YHR070W"/>
<dbReference type="PeptideAtlas" id="P38793"/>
<dbReference type="EnsemblFungi" id="YHR070W_mRNA">
    <property type="protein sequence ID" value="YHR070W"/>
    <property type="gene ID" value="YHR070W"/>
</dbReference>
<dbReference type="GeneID" id="856467"/>
<dbReference type="KEGG" id="sce:YHR070W"/>
<dbReference type="AGR" id="SGD:S000001112"/>
<dbReference type="SGD" id="S000001112">
    <property type="gene designation" value="TRM5"/>
</dbReference>
<dbReference type="VEuPathDB" id="FungiDB:YHR070W"/>
<dbReference type="eggNOG" id="KOG2078">
    <property type="taxonomic scope" value="Eukaryota"/>
</dbReference>
<dbReference type="GeneTree" id="ENSGT00940000153304"/>
<dbReference type="HOGENOM" id="CLU_022610_2_2_1"/>
<dbReference type="InParanoid" id="P38793"/>
<dbReference type="OMA" id="VGSHSQF"/>
<dbReference type="OrthoDB" id="408788at2759"/>
<dbReference type="BioCyc" id="MetaCyc:G3O-31120-MONOMER"/>
<dbReference type="BioCyc" id="YEAST:G3O-31120-MONOMER"/>
<dbReference type="BRENDA" id="2.1.1.228">
    <property type="organism ID" value="984"/>
</dbReference>
<dbReference type="BioGRID-ORCS" id="856467">
    <property type="hits" value="1 hit in 10 CRISPR screens"/>
</dbReference>
<dbReference type="PRO" id="PR:P38793"/>
<dbReference type="Proteomes" id="UP000002311">
    <property type="component" value="Chromosome VIII"/>
</dbReference>
<dbReference type="RNAct" id="P38793">
    <property type="molecule type" value="protein"/>
</dbReference>
<dbReference type="GO" id="GO:0005737">
    <property type="term" value="C:cytoplasm"/>
    <property type="evidence" value="ECO:0000314"/>
    <property type="project" value="SGD"/>
</dbReference>
<dbReference type="GO" id="GO:0005759">
    <property type="term" value="C:mitochondrial matrix"/>
    <property type="evidence" value="ECO:0000314"/>
    <property type="project" value="SGD"/>
</dbReference>
<dbReference type="GO" id="GO:0005654">
    <property type="term" value="C:nucleoplasm"/>
    <property type="evidence" value="ECO:0000304"/>
    <property type="project" value="Reactome"/>
</dbReference>
<dbReference type="GO" id="GO:0005634">
    <property type="term" value="C:nucleus"/>
    <property type="evidence" value="ECO:0007005"/>
    <property type="project" value="SGD"/>
</dbReference>
<dbReference type="GO" id="GO:0052906">
    <property type="term" value="F:tRNA (guanine(37)-N1)-methyltransferase activity"/>
    <property type="evidence" value="ECO:0000314"/>
    <property type="project" value="SGD"/>
</dbReference>
<dbReference type="GO" id="GO:0008175">
    <property type="term" value="F:tRNA methyltransferase activity"/>
    <property type="evidence" value="ECO:0000318"/>
    <property type="project" value="GO_Central"/>
</dbReference>
<dbReference type="GO" id="GO:0070901">
    <property type="term" value="P:mitochondrial tRNA methylation"/>
    <property type="evidence" value="ECO:0000314"/>
    <property type="project" value="SGD"/>
</dbReference>
<dbReference type="GO" id="GO:0006400">
    <property type="term" value="P:tRNA modification"/>
    <property type="evidence" value="ECO:0000304"/>
    <property type="project" value="Reactome"/>
</dbReference>
<dbReference type="GO" id="GO:0002939">
    <property type="term" value="P:tRNA N1-guanine methylation"/>
    <property type="evidence" value="ECO:0000314"/>
    <property type="project" value="SGD"/>
</dbReference>
<dbReference type="FunFam" id="3.30.300.110:FF:000001">
    <property type="entry name" value="tRNA (guanine(37)-N1)-methyltransferase"/>
    <property type="match status" value="1"/>
</dbReference>
<dbReference type="Gene3D" id="3.30.300.110">
    <property type="entry name" value="Met-10+ protein-like domains"/>
    <property type="match status" value="1"/>
</dbReference>
<dbReference type="Gene3D" id="3.40.50.150">
    <property type="entry name" value="Vaccinia Virus protein VP39"/>
    <property type="match status" value="1"/>
</dbReference>
<dbReference type="HAMAP" id="MF_03152">
    <property type="entry name" value="TRM5"/>
    <property type="match status" value="1"/>
</dbReference>
<dbReference type="InterPro" id="IPR030382">
    <property type="entry name" value="MeTrfase_TRM5/TYW2"/>
</dbReference>
<dbReference type="InterPro" id="IPR029063">
    <property type="entry name" value="SAM-dependent_MTases_sf"/>
</dbReference>
<dbReference type="InterPro" id="IPR056743">
    <property type="entry name" value="TRM5-TYW2-like_MTfase"/>
</dbReference>
<dbReference type="InterPro" id="IPR056744">
    <property type="entry name" value="TRM5/TYW2-like_N"/>
</dbReference>
<dbReference type="InterPro" id="IPR025792">
    <property type="entry name" value="tRNA_Gua_MeTrfase_euk"/>
</dbReference>
<dbReference type="PANTHER" id="PTHR23245:SF36">
    <property type="entry name" value="TRNA (GUANINE(37)-N1)-METHYLTRANSFERASE"/>
    <property type="match status" value="1"/>
</dbReference>
<dbReference type="PANTHER" id="PTHR23245">
    <property type="entry name" value="TRNA METHYLTRANSFERASE"/>
    <property type="match status" value="1"/>
</dbReference>
<dbReference type="Pfam" id="PF02475">
    <property type="entry name" value="TRM5-TYW2_MTfase"/>
    <property type="match status" value="1"/>
</dbReference>
<dbReference type="Pfam" id="PF25133">
    <property type="entry name" value="TYW2_N_2"/>
    <property type="match status" value="1"/>
</dbReference>
<dbReference type="SUPFAM" id="SSF53335">
    <property type="entry name" value="S-adenosyl-L-methionine-dependent methyltransferases"/>
    <property type="match status" value="1"/>
</dbReference>
<dbReference type="PROSITE" id="PS51684">
    <property type="entry name" value="SAM_MT_TRM5_TYW2"/>
    <property type="match status" value="1"/>
</dbReference>
<accession>P38793</accession>
<accession>D3DL19</accession>
<comment type="function">
    <text evidence="1 2 4 5 6">Specifically methylates the N1 position of guanosine-37 in various cytoplasmic and mitochondrial tRNAs. Methylation is not dependent on the nature of the nucleoside 5' of the target nucleoside. This is the first step in the biosynthesis of wybutosine (yW), a modified base adjacent to the anticodon of tRNAs and required for accurate decoding. Postspliced cytoplasmic tRNAs are imported into the nucleus, where this first step seems to take place, after which they are reexported to the cytoplasm, where the yW sythesis is completed by cytoplasmic enzymes.</text>
</comment>
<comment type="catalytic activity">
    <reaction evidence="1">
        <text>guanosine(37) in tRNA + S-adenosyl-L-methionine = N(1)-methylguanosine(37) in tRNA + S-adenosyl-L-homocysteine + H(+)</text>
        <dbReference type="Rhea" id="RHEA:36899"/>
        <dbReference type="Rhea" id="RHEA-COMP:10145"/>
        <dbReference type="Rhea" id="RHEA-COMP:10147"/>
        <dbReference type="ChEBI" id="CHEBI:15378"/>
        <dbReference type="ChEBI" id="CHEBI:57856"/>
        <dbReference type="ChEBI" id="CHEBI:59789"/>
        <dbReference type="ChEBI" id="CHEBI:73542"/>
        <dbReference type="ChEBI" id="CHEBI:74269"/>
        <dbReference type="EC" id="2.1.1.228"/>
    </reaction>
</comment>
<comment type="subunit">
    <text evidence="1">Monomer.</text>
</comment>
<comment type="subcellular location">
    <subcellularLocation>
        <location>Mitochondrion matrix</location>
    </subcellularLocation>
    <subcellularLocation>
        <location>Nucleus</location>
    </subcellularLocation>
    <subcellularLocation>
        <location>Cytoplasm</location>
    </subcellularLocation>
    <text>Predominantly in the mitochondria and in the nucleus.</text>
</comment>
<comment type="miscellaneous">
    <text evidence="3">Present with 4120 molecules/cell in log phase SD medium.</text>
</comment>
<comment type="miscellaneous">
    <text>It is unsure how the mitochondrial and cytoplasmic forms of this protein are produced. The cytoplasmic form may be produced by alternative initiation at a downstream in-frame AUG codon at position 34, lacking a mitochondrial transit peptide.</text>
</comment>
<comment type="similarity">
    <text evidence="7">Belongs to the class I-like SAM-binding methyltransferase superfamily. TRM5/TYW2 family.</text>
</comment>
<reference key="1">
    <citation type="journal article" date="1994" name="Science">
        <title>Complete nucleotide sequence of Saccharomyces cerevisiae chromosome VIII.</title>
        <authorList>
            <person name="Johnston M."/>
            <person name="Andrews S."/>
            <person name="Brinkman R."/>
            <person name="Cooper J."/>
            <person name="Ding H."/>
            <person name="Dover J."/>
            <person name="Du Z."/>
            <person name="Favello A."/>
            <person name="Fulton L."/>
            <person name="Gattung S."/>
            <person name="Geisel C."/>
            <person name="Kirsten J."/>
            <person name="Kucaba T."/>
            <person name="Hillier L.W."/>
            <person name="Jier M."/>
            <person name="Johnston L."/>
            <person name="Langston Y."/>
            <person name="Latreille P."/>
            <person name="Louis E.J."/>
            <person name="Macri C."/>
            <person name="Mardis E."/>
            <person name="Menezes S."/>
            <person name="Mouser L."/>
            <person name="Nhan M."/>
            <person name="Rifkin L."/>
            <person name="Riles L."/>
            <person name="St Peter H."/>
            <person name="Trevaskis E."/>
            <person name="Vaughan K."/>
            <person name="Vignati D."/>
            <person name="Wilcox L."/>
            <person name="Wohldman P."/>
            <person name="Waterston R."/>
            <person name="Wilson R."/>
            <person name="Vaudin M."/>
        </authorList>
    </citation>
    <scope>NUCLEOTIDE SEQUENCE [LARGE SCALE GENOMIC DNA]</scope>
    <source>
        <strain>ATCC 204508 / S288c</strain>
    </source>
</reference>
<reference key="2">
    <citation type="journal article" date="2014" name="G3 (Bethesda)">
        <title>The reference genome sequence of Saccharomyces cerevisiae: Then and now.</title>
        <authorList>
            <person name="Engel S.R."/>
            <person name="Dietrich F.S."/>
            <person name="Fisk D.G."/>
            <person name="Binkley G."/>
            <person name="Balakrishnan R."/>
            <person name="Costanzo M.C."/>
            <person name="Dwight S.S."/>
            <person name="Hitz B.C."/>
            <person name="Karra K."/>
            <person name="Nash R.S."/>
            <person name="Weng S."/>
            <person name="Wong E.D."/>
            <person name="Lloyd P."/>
            <person name="Skrzypek M.S."/>
            <person name="Miyasato S.R."/>
            <person name="Simison M."/>
            <person name="Cherry J.M."/>
        </authorList>
    </citation>
    <scope>GENOME REANNOTATION</scope>
    <source>
        <strain>ATCC 204508 / S288c</strain>
    </source>
</reference>
<reference key="3">
    <citation type="journal article" date="2001" name="EMBO J.">
        <title>A primordial tRNA modification required for the evolution of life?</title>
        <authorList>
            <person name="Bjork G.R."/>
            <person name="Jacobsson K."/>
            <person name="Nilsson K."/>
            <person name="Johansson M.J."/>
            <person name="Bystroem A.S."/>
            <person name="Persson O.P."/>
        </authorList>
    </citation>
    <scope>FUNCTION</scope>
</reference>
<reference key="4">
    <citation type="journal article" date="2003" name="Nature">
        <title>Global analysis of protein localization in budding yeast.</title>
        <authorList>
            <person name="Huh W.-K."/>
            <person name="Falvo J.V."/>
            <person name="Gerke L.C."/>
            <person name="Carroll A.S."/>
            <person name="Howson R.W."/>
            <person name="Weissman J.S."/>
            <person name="O'Shea E.K."/>
        </authorList>
    </citation>
    <scope>SUBCELLULAR LOCATION [LARGE SCALE ANALYSIS]</scope>
</reference>
<reference key="5">
    <citation type="journal article" date="2003" name="Nature">
        <title>Global analysis of protein expression in yeast.</title>
        <authorList>
            <person name="Ghaemmaghami S."/>
            <person name="Huh W.-K."/>
            <person name="Bower K."/>
            <person name="Howson R.W."/>
            <person name="Belle A."/>
            <person name="Dephoure N."/>
            <person name="O'Shea E.K."/>
            <person name="Weissman J.S."/>
        </authorList>
    </citation>
    <scope>LEVEL OF PROTEIN EXPRESSION [LARGE SCALE ANALYSIS]</scope>
</reference>
<reference key="6">
    <citation type="journal article" date="2007" name="J. Biol. Chem.">
        <title>Yeast mitochondrial initiator tRNA is methylated at guanosine 37 by the Trm5-encoded tRNA (guanine-N1-)-methyltransferase.</title>
        <authorList>
            <person name="Lee C."/>
            <person name="Kramer G."/>
            <person name="Graham D.E."/>
            <person name="Appling D.R."/>
        </authorList>
    </citation>
    <scope>FUNCTION</scope>
    <scope>SUBCELLULAR LOCATION</scope>
    <scope>MUTAGENESIS OF 1-MET--GLN-33</scope>
</reference>
<reference key="7">
    <citation type="journal article" date="2008" name="Methods Mol. Biol.">
        <title>The use of Saccharomyces cerevisiae proteomic libraries to identify RNA-modifying proteins.</title>
        <authorList>
            <person name="Jackman J.E."/>
            <person name="Grayhack E.J."/>
            <person name="Phizicky E.M."/>
        </authorList>
    </citation>
    <scope>FUNCTION</scope>
</reference>
<reference key="8">
    <citation type="journal article" date="2011" name="Proc. Natl. Acad. Sci. U.S.A.">
        <title>Retrograde nuclear import of tRNA precursors is required for modified base biogenesis in yeast.</title>
        <authorList>
            <person name="Ohira T."/>
            <person name="Suzuki T."/>
        </authorList>
    </citation>
    <scope>FUNCTION</scope>
    <scope>SUBCELLULAR LOCATION</scope>
</reference>
<gene>
    <name evidence="1" type="primary">TRM5</name>
    <name type="ordered locus">YHR070W</name>
</gene>
<sequence>MKIALPVFQKFNRLISSCKMSGVFPYNPPVNRQMRELDRSFFITKIPMCAVKFPEPKNISVFSKNFKNCILRVPRIPHVVKLNSSKPKDELTSVQNKKLKTADGNNTPVTKGVLLHESIHSVEDAYGKLPEDALAFLKENSAEIVPHEYVLDYDFWKAEEILRAVLPEQFLEEVPTGFTITGHIAHLNLRTEFKPFDSLIGQVILDKNNKIECVVDKVSSIATQFRTFPMKVIAGKSDSLVVEQKESNCTFKFDFSKVYWNSRLHTEHERLVKQYFQPGQVVCDVFAGVGPFAVPAGKKDVIVLANDLNPESYKYLKENIALNKVAKTVKSFNMDGADFIRQSPQLLQQWIQDEEGGKITIPLPLKKRHRSQQHNDQQPPQPRTKELIIPSHISHYVMNLPDSAISFLGNFRGIFAAHTKGATDTIQMPWVHVHCFEKYPPGDQVTEDELHARVHARIIAALKVTADDLPLNAVSLHLVRKVAPTKPMYCASFQLPANV</sequence>